<gene>
    <name evidence="1" type="primary">ligA</name>
    <name type="ordered locus">Wbm0548</name>
</gene>
<reference key="1">
    <citation type="journal article" date="2005" name="PLoS Biol.">
        <title>The Wolbachia genome of Brugia malayi: endosymbiont evolution within a human pathogenic nematode.</title>
        <authorList>
            <person name="Foster J."/>
            <person name="Ganatra M."/>
            <person name="Kamal I."/>
            <person name="Ware J."/>
            <person name="Makarova K."/>
            <person name="Ivanova N."/>
            <person name="Bhattacharyya A."/>
            <person name="Kapatral V."/>
            <person name="Kumar S."/>
            <person name="Posfai J."/>
            <person name="Vincze T."/>
            <person name="Ingram J."/>
            <person name="Moran L."/>
            <person name="Lapidus A."/>
            <person name="Omelchenko M."/>
            <person name="Kyrpides N."/>
            <person name="Ghedin E."/>
            <person name="Wang S."/>
            <person name="Goltsman E."/>
            <person name="Joukov V."/>
            <person name="Ostrovskaya O."/>
            <person name="Tsukerman K."/>
            <person name="Mazur M."/>
            <person name="Comb D."/>
            <person name="Koonin E."/>
            <person name="Slatko B."/>
        </authorList>
    </citation>
    <scope>NUCLEOTIDE SEQUENCE [LARGE SCALE GENOMIC DNA]</scope>
    <source>
        <strain>TRS</strain>
    </source>
</reference>
<sequence>MADLEKMIEEFTKLRDQISYHDVLYHQKSKPEIADAEYDKLKQKLVEMEGQLPGACVTQDGVGAAPDEKFSKIKHREPMLSLENAYDEQGVERFLSRIKRFLIEEEIEVFCEPKIDGLSFSAVYEDGRFVKAATRGDGFIGEDVTRNVATIKGFPRFLQDVQDRLEVRGEIYINNSDFLKLNKDNEFANPRNAAAGSLKQLDVSITANRPLKYFAYSLIGGKEKSQSEVLNRLESLGFCVNEHRSLTNNLSGMLEFYNKVYNCRYSLDYDIDGIVYKVNDLILQSRLGSTHKAPRSALAYKFSAVYAKTKLNKIFIQVGRTGVLTPVADLIPVNIGGVLVSRANLHNQDEIKRKDVREGDIVTIKRAGDVIPQIVRVDKGSRHADAPGFVFPEICPECGGKVQAEGAAIRCSEELTCKAQIIGKLSHFVSKGAFDIFGLGEKQIKFFYDLGLIKQIPDIFNLEERLNEFSLKEQPDWGERSIANLLNAIQNRRVITLDRFIFSLGIRFIGQVAAELLANYYVSYNNWYNSMIKLLSNDAEVGVGGVEKKIAKSFSDELVGIDGIGEKVAESLKSFFSKEHNIKMLKDLTDYLQILSVNSNSSNSVLNNKVIVFTGKLLTMSRGEAKVRAKALGAKVSSNLSAKIDYLVAGEKPGNKYKKAVELGVGILNEDQWYRMINSEVSE</sequence>
<organism>
    <name type="scientific">Wolbachia sp. subsp. Brugia malayi (strain TRS)</name>
    <dbReference type="NCBI Taxonomy" id="292805"/>
    <lineage>
        <taxon>Bacteria</taxon>
        <taxon>Pseudomonadati</taxon>
        <taxon>Pseudomonadota</taxon>
        <taxon>Alphaproteobacteria</taxon>
        <taxon>Rickettsiales</taxon>
        <taxon>Anaplasmataceae</taxon>
        <taxon>Wolbachieae</taxon>
        <taxon>Wolbachia</taxon>
    </lineage>
</organism>
<protein>
    <recommendedName>
        <fullName evidence="1">DNA ligase</fullName>
        <ecNumber evidence="1">6.5.1.2</ecNumber>
    </recommendedName>
    <alternativeName>
        <fullName evidence="1">Polydeoxyribonucleotide synthase [NAD(+)]</fullName>
    </alternativeName>
</protein>
<name>DNLJ_WOLTR</name>
<keyword id="KW-0227">DNA damage</keyword>
<keyword id="KW-0234">DNA repair</keyword>
<keyword id="KW-0235">DNA replication</keyword>
<keyword id="KW-0436">Ligase</keyword>
<keyword id="KW-0460">Magnesium</keyword>
<keyword id="KW-0464">Manganese</keyword>
<keyword id="KW-0479">Metal-binding</keyword>
<keyword id="KW-0520">NAD</keyword>
<keyword id="KW-1185">Reference proteome</keyword>
<keyword id="KW-0862">Zinc</keyword>
<dbReference type="EC" id="6.5.1.2" evidence="1"/>
<dbReference type="EMBL" id="AE017321">
    <property type="protein sequence ID" value="AAW71136.1"/>
    <property type="molecule type" value="Genomic_DNA"/>
</dbReference>
<dbReference type="RefSeq" id="WP_011256746.1">
    <property type="nucleotide sequence ID" value="NC_006833.1"/>
</dbReference>
<dbReference type="SMR" id="Q5GS88"/>
<dbReference type="STRING" id="292805.Wbm0548"/>
<dbReference type="KEGG" id="wbm:Wbm0548"/>
<dbReference type="eggNOG" id="COG0272">
    <property type="taxonomic scope" value="Bacteria"/>
</dbReference>
<dbReference type="HOGENOM" id="CLU_007764_2_1_5"/>
<dbReference type="BRENDA" id="6.5.1.2">
    <property type="organism ID" value="16202"/>
</dbReference>
<dbReference type="Proteomes" id="UP000000534">
    <property type="component" value="Chromosome"/>
</dbReference>
<dbReference type="GO" id="GO:0003911">
    <property type="term" value="F:DNA ligase (NAD+) activity"/>
    <property type="evidence" value="ECO:0007669"/>
    <property type="project" value="UniProtKB-UniRule"/>
</dbReference>
<dbReference type="GO" id="GO:0046872">
    <property type="term" value="F:metal ion binding"/>
    <property type="evidence" value="ECO:0007669"/>
    <property type="project" value="UniProtKB-KW"/>
</dbReference>
<dbReference type="GO" id="GO:0006281">
    <property type="term" value="P:DNA repair"/>
    <property type="evidence" value="ECO:0007669"/>
    <property type="project" value="UniProtKB-KW"/>
</dbReference>
<dbReference type="GO" id="GO:0006260">
    <property type="term" value="P:DNA replication"/>
    <property type="evidence" value="ECO:0007669"/>
    <property type="project" value="UniProtKB-KW"/>
</dbReference>
<dbReference type="CDD" id="cd17748">
    <property type="entry name" value="BRCT_DNA_ligase_like"/>
    <property type="match status" value="1"/>
</dbReference>
<dbReference type="CDD" id="cd00114">
    <property type="entry name" value="LIGANc"/>
    <property type="match status" value="1"/>
</dbReference>
<dbReference type="FunFam" id="2.40.50.140:FF:000012">
    <property type="entry name" value="DNA ligase"/>
    <property type="match status" value="1"/>
</dbReference>
<dbReference type="Gene3D" id="6.20.10.30">
    <property type="match status" value="1"/>
</dbReference>
<dbReference type="Gene3D" id="1.10.150.20">
    <property type="entry name" value="5' to 3' exonuclease, C-terminal subdomain"/>
    <property type="match status" value="2"/>
</dbReference>
<dbReference type="Gene3D" id="3.40.50.10190">
    <property type="entry name" value="BRCT domain"/>
    <property type="match status" value="1"/>
</dbReference>
<dbReference type="Gene3D" id="3.30.470.30">
    <property type="entry name" value="DNA ligase/mRNA capping enzyme"/>
    <property type="match status" value="1"/>
</dbReference>
<dbReference type="Gene3D" id="1.10.287.610">
    <property type="entry name" value="Helix hairpin bin"/>
    <property type="match status" value="1"/>
</dbReference>
<dbReference type="Gene3D" id="2.40.50.140">
    <property type="entry name" value="Nucleic acid-binding proteins"/>
    <property type="match status" value="1"/>
</dbReference>
<dbReference type="HAMAP" id="MF_01588">
    <property type="entry name" value="DNA_ligase_A"/>
    <property type="match status" value="1"/>
</dbReference>
<dbReference type="InterPro" id="IPR001357">
    <property type="entry name" value="BRCT_dom"/>
</dbReference>
<dbReference type="InterPro" id="IPR036420">
    <property type="entry name" value="BRCT_dom_sf"/>
</dbReference>
<dbReference type="InterPro" id="IPR001679">
    <property type="entry name" value="DNA_ligase"/>
</dbReference>
<dbReference type="InterPro" id="IPR018239">
    <property type="entry name" value="DNA_ligase_AS"/>
</dbReference>
<dbReference type="InterPro" id="IPR033136">
    <property type="entry name" value="DNA_ligase_CS"/>
</dbReference>
<dbReference type="InterPro" id="IPR013839">
    <property type="entry name" value="DNAligase_adenylation"/>
</dbReference>
<dbReference type="InterPro" id="IPR013840">
    <property type="entry name" value="DNAligase_N"/>
</dbReference>
<dbReference type="InterPro" id="IPR012340">
    <property type="entry name" value="NA-bd_OB-fold"/>
</dbReference>
<dbReference type="InterPro" id="IPR004150">
    <property type="entry name" value="NAD_DNA_ligase_OB"/>
</dbReference>
<dbReference type="InterPro" id="IPR010994">
    <property type="entry name" value="RuvA_2-like"/>
</dbReference>
<dbReference type="NCBIfam" id="TIGR00575">
    <property type="entry name" value="dnlj"/>
    <property type="match status" value="1"/>
</dbReference>
<dbReference type="NCBIfam" id="NF005932">
    <property type="entry name" value="PRK07956.1"/>
    <property type="match status" value="1"/>
</dbReference>
<dbReference type="Pfam" id="PF00533">
    <property type="entry name" value="BRCT"/>
    <property type="match status" value="1"/>
</dbReference>
<dbReference type="Pfam" id="PF01653">
    <property type="entry name" value="DNA_ligase_aden"/>
    <property type="match status" value="1"/>
</dbReference>
<dbReference type="Pfam" id="PF03120">
    <property type="entry name" value="DNA_ligase_OB"/>
    <property type="match status" value="1"/>
</dbReference>
<dbReference type="Pfam" id="PF22745">
    <property type="entry name" value="Nlig-Ia"/>
    <property type="match status" value="1"/>
</dbReference>
<dbReference type="PIRSF" id="PIRSF001604">
    <property type="entry name" value="LigA"/>
    <property type="match status" value="1"/>
</dbReference>
<dbReference type="SMART" id="SM00292">
    <property type="entry name" value="BRCT"/>
    <property type="match status" value="1"/>
</dbReference>
<dbReference type="SMART" id="SM00532">
    <property type="entry name" value="LIGANc"/>
    <property type="match status" value="1"/>
</dbReference>
<dbReference type="SUPFAM" id="SSF52113">
    <property type="entry name" value="BRCT domain"/>
    <property type="match status" value="1"/>
</dbReference>
<dbReference type="SUPFAM" id="SSF56091">
    <property type="entry name" value="DNA ligase/mRNA capping enzyme, catalytic domain"/>
    <property type="match status" value="1"/>
</dbReference>
<dbReference type="SUPFAM" id="SSF50249">
    <property type="entry name" value="Nucleic acid-binding proteins"/>
    <property type="match status" value="1"/>
</dbReference>
<dbReference type="SUPFAM" id="SSF47781">
    <property type="entry name" value="RuvA domain 2-like"/>
    <property type="match status" value="1"/>
</dbReference>
<dbReference type="PROSITE" id="PS50172">
    <property type="entry name" value="BRCT"/>
    <property type="match status" value="1"/>
</dbReference>
<dbReference type="PROSITE" id="PS01055">
    <property type="entry name" value="DNA_LIGASE_N1"/>
    <property type="match status" value="1"/>
</dbReference>
<dbReference type="PROSITE" id="PS01056">
    <property type="entry name" value="DNA_LIGASE_N2"/>
    <property type="match status" value="1"/>
</dbReference>
<proteinExistence type="inferred from homology"/>
<accession>Q5GS88</accession>
<feature type="chain" id="PRO_0000313512" description="DNA ligase">
    <location>
        <begin position="1"/>
        <end position="683"/>
    </location>
</feature>
<feature type="domain" description="BRCT" evidence="1">
    <location>
        <begin position="601"/>
        <end position="683"/>
    </location>
</feature>
<feature type="active site" description="N6-AMP-lysine intermediate" evidence="1">
    <location>
        <position position="114"/>
    </location>
</feature>
<feature type="binding site" evidence="1">
    <location>
        <begin position="35"/>
        <end position="39"/>
    </location>
    <ligand>
        <name>NAD(+)</name>
        <dbReference type="ChEBI" id="CHEBI:57540"/>
    </ligand>
</feature>
<feature type="binding site" evidence="1">
    <location>
        <begin position="81"/>
        <end position="82"/>
    </location>
    <ligand>
        <name>NAD(+)</name>
        <dbReference type="ChEBI" id="CHEBI:57540"/>
    </ligand>
</feature>
<feature type="binding site" evidence="1">
    <location>
        <position position="112"/>
    </location>
    <ligand>
        <name>NAD(+)</name>
        <dbReference type="ChEBI" id="CHEBI:57540"/>
    </ligand>
</feature>
<feature type="binding site" evidence="1">
    <location>
        <position position="135"/>
    </location>
    <ligand>
        <name>NAD(+)</name>
        <dbReference type="ChEBI" id="CHEBI:57540"/>
    </ligand>
</feature>
<feature type="binding site" evidence="1">
    <location>
        <position position="170"/>
    </location>
    <ligand>
        <name>NAD(+)</name>
        <dbReference type="ChEBI" id="CHEBI:57540"/>
    </ligand>
</feature>
<feature type="binding site" evidence="1">
    <location>
        <position position="277"/>
    </location>
    <ligand>
        <name>NAD(+)</name>
        <dbReference type="ChEBI" id="CHEBI:57540"/>
    </ligand>
</feature>
<feature type="binding site" evidence="1">
    <location>
        <position position="301"/>
    </location>
    <ligand>
        <name>NAD(+)</name>
        <dbReference type="ChEBI" id="CHEBI:57540"/>
    </ligand>
</feature>
<feature type="binding site" evidence="1">
    <location>
        <position position="395"/>
    </location>
    <ligand>
        <name>Zn(2+)</name>
        <dbReference type="ChEBI" id="CHEBI:29105"/>
    </ligand>
</feature>
<feature type="binding site" evidence="1">
    <location>
        <position position="398"/>
    </location>
    <ligand>
        <name>Zn(2+)</name>
        <dbReference type="ChEBI" id="CHEBI:29105"/>
    </ligand>
</feature>
<feature type="binding site" evidence="1">
    <location>
        <position position="411"/>
    </location>
    <ligand>
        <name>Zn(2+)</name>
        <dbReference type="ChEBI" id="CHEBI:29105"/>
    </ligand>
</feature>
<feature type="binding site" evidence="1">
    <location>
        <position position="417"/>
    </location>
    <ligand>
        <name>Zn(2+)</name>
        <dbReference type="ChEBI" id="CHEBI:29105"/>
    </ligand>
</feature>
<comment type="function">
    <text evidence="1">DNA ligase that catalyzes the formation of phosphodiester linkages between 5'-phosphoryl and 3'-hydroxyl groups in double-stranded DNA using NAD as a coenzyme and as the energy source for the reaction. It is essential for DNA replication and repair of damaged DNA.</text>
</comment>
<comment type="catalytic activity">
    <reaction evidence="1">
        <text>NAD(+) + (deoxyribonucleotide)n-3'-hydroxyl + 5'-phospho-(deoxyribonucleotide)m = (deoxyribonucleotide)n+m + AMP + beta-nicotinamide D-nucleotide.</text>
        <dbReference type="EC" id="6.5.1.2"/>
    </reaction>
</comment>
<comment type="cofactor">
    <cofactor evidence="1">
        <name>Mg(2+)</name>
        <dbReference type="ChEBI" id="CHEBI:18420"/>
    </cofactor>
    <cofactor evidence="1">
        <name>Mn(2+)</name>
        <dbReference type="ChEBI" id="CHEBI:29035"/>
    </cofactor>
</comment>
<comment type="similarity">
    <text evidence="1">Belongs to the NAD-dependent DNA ligase family. LigA subfamily.</text>
</comment>
<evidence type="ECO:0000255" key="1">
    <source>
        <dbReference type="HAMAP-Rule" id="MF_01588"/>
    </source>
</evidence>